<reference key="1">
    <citation type="journal article" date="2003" name="Nat. Biotechnol.">
        <title>The genome sequence of the entomopathogenic bacterium Photorhabdus luminescens.</title>
        <authorList>
            <person name="Duchaud E."/>
            <person name="Rusniok C."/>
            <person name="Frangeul L."/>
            <person name="Buchrieser C."/>
            <person name="Givaudan A."/>
            <person name="Taourit S."/>
            <person name="Bocs S."/>
            <person name="Boursaux-Eude C."/>
            <person name="Chandler M."/>
            <person name="Charles J.-F."/>
            <person name="Dassa E."/>
            <person name="Derose R."/>
            <person name="Derzelle S."/>
            <person name="Freyssinet G."/>
            <person name="Gaudriault S."/>
            <person name="Medigue C."/>
            <person name="Lanois A."/>
            <person name="Powell K."/>
            <person name="Siguier P."/>
            <person name="Vincent R."/>
            <person name="Wingate V."/>
            <person name="Zouine M."/>
            <person name="Glaser P."/>
            <person name="Boemare N."/>
            <person name="Danchin A."/>
            <person name="Kunst F."/>
        </authorList>
    </citation>
    <scope>NUCLEOTIDE SEQUENCE [LARGE SCALE GENOMIC DNA]</scope>
    <source>
        <strain>DSM 15139 / CIP 105565 / TT01</strain>
    </source>
</reference>
<evidence type="ECO:0000255" key="1">
    <source>
        <dbReference type="HAMAP-Rule" id="MF_00158"/>
    </source>
</evidence>
<organism>
    <name type="scientific">Photorhabdus laumondii subsp. laumondii (strain DSM 15139 / CIP 105565 / TT01)</name>
    <name type="common">Photorhabdus luminescens subsp. laumondii</name>
    <dbReference type="NCBI Taxonomy" id="243265"/>
    <lineage>
        <taxon>Bacteria</taxon>
        <taxon>Pseudomonadati</taxon>
        <taxon>Pseudomonadota</taxon>
        <taxon>Gammaproteobacteria</taxon>
        <taxon>Enterobacterales</taxon>
        <taxon>Morganellaceae</taxon>
        <taxon>Photorhabdus</taxon>
    </lineage>
</organism>
<gene>
    <name evidence="1" type="primary">panC</name>
    <name type="ordered locus">plu0871</name>
</gene>
<protein>
    <recommendedName>
        <fullName evidence="1">Pantothenate synthetase</fullName>
        <shortName evidence="1">PS</shortName>
        <ecNumber evidence="1">6.3.2.1</ecNumber>
    </recommendedName>
    <alternativeName>
        <fullName evidence="1">Pantoate--beta-alanine ligase</fullName>
    </alternativeName>
    <alternativeName>
        <fullName evidence="1">Pantoate-activating enzyme</fullName>
    </alternativeName>
</protein>
<accession>Q7N870</accession>
<proteinExistence type="inferred from homology"/>
<dbReference type="EC" id="6.3.2.1" evidence="1"/>
<dbReference type="EMBL" id="BX571861">
    <property type="protein sequence ID" value="CAE13166.1"/>
    <property type="molecule type" value="Genomic_DNA"/>
</dbReference>
<dbReference type="RefSeq" id="WP_011145239.1">
    <property type="nucleotide sequence ID" value="NC_005126.1"/>
</dbReference>
<dbReference type="SMR" id="Q7N870"/>
<dbReference type="STRING" id="243265.plu0871"/>
<dbReference type="GeneID" id="48847160"/>
<dbReference type="KEGG" id="plu:plu0871"/>
<dbReference type="eggNOG" id="COG0414">
    <property type="taxonomic scope" value="Bacteria"/>
</dbReference>
<dbReference type="HOGENOM" id="CLU_047148_0_0_6"/>
<dbReference type="OrthoDB" id="9773087at2"/>
<dbReference type="UniPathway" id="UPA00028">
    <property type="reaction ID" value="UER00005"/>
</dbReference>
<dbReference type="Proteomes" id="UP000002514">
    <property type="component" value="Chromosome"/>
</dbReference>
<dbReference type="GO" id="GO:0005829">
    <property type="term" value="C:cytosol"/>
    <property type="evidence" value="ECO:0007669"/>
    <property type="project" value="TreeGrafter"/>
</dbReference>
<dbReference type="GO" id="GO:0005524">
    <property type="term" value="F:ATP binding"/>
    <property type="evidence" value="ECO:0007669"/>
    <property type="project" value="UniProtKB-KW"/>
</dbReference>
<dbReference type="GO" id="GO:0004592">
    <property type="term" value="F:pantoate-beta-alanine ligase activity"/>
    <property type="evidence" value="ECO:0007669"/>
    <property type="project" value="UniProtKB-UniRule"/>
</dbReference>
<dbReference type="GO" id="GO:0015940">
    <property type="term" value="P:pantothenate biosynthetic process"/>
    <property type="evidence" value="ECO:0007669"/>
    <property type="project" value="UniProtKB-UniRule"/>
</dbReference>
<dbReference type="CDD" id="cd00560">
    <property type="entry name" value="PanC"/>
    <property type="match status" value="1"/>
</dbReference>
<dbReference type="FunFam" id="3.30.1300.10:FF:000001">
    <property type="entry name" value="Pantothenate synthetase"/>
    <property type="match status" value="1"/>
</dbReference>
<dbReference type="FunFam" id="3.40.50.620:FF:000013">
    <property type="entry name" value="Pantothenate synthetase"/>
    <property type="match status" value="1"/>
</dbReference>
<dbReference type="Gene3D" id="3.40.50.620">
    <property type="entry name" value="HUPs"/>
    <property type="match status" value="1"/>
</dbReference>
<dbReference type="Gene3D" id="3.30.1300.10">
    <property type="entry name" value="Pantoate-beta-alanine ligase, C-terminal domain"/>
    <property type="match status" value="1"/>
</dbReference>
<dbReference type="HAMAP" id="MF_00158">
    <property type="entry name" value="PanC"/>
    <property type="match status" value="1"/>
</dbReference>
<dbReference type="InterPro" id="IPR004821">
    <property type="entry name" value="Cyt_trans-like"/>
</dbReference>
<dbReference type="InterPro" id="IPR003721">
    <property type="entry name" value="Pantoate_ligase"/>
</dbReference>
<dbReference type="InterPro" id="IPR042176">
    <property type="entry name" value="Pantoate_ligase_C"/>
</dbReference>
<dbReference type="InterPro" id="IPR014729">
    <property type="entry name" value="Rossmann-like_a/b/a_fold"/>
</dbReference>
<dbReference type="NCBIfam" id="TIGR00125">
    <property type="entry name" value="cyt_tran_rel"/>
    <property type="match status" value="1"/>
</dbReference>
<dbReference type="NCBIfam" id="TIGR00018">
    <property type="entry name" value="panC"/>
    <property type="match status" value="1"/>
</dbReference>
<dbReference type="PANTHER" id="PTHR21299">
    <property type="entry name" value="CYTIDYLATE KINASE/PANTOATE-BETA-ALANINE LIGASE"/>
    <property type="match status" value="1"/>
</dbReference>
<dbReference type="PANTHER" id="PTHR21299:SF1">
    <property type="entry name" value="PANTOATE--BETA-ALANINE LIGASE"/>
    <property type="match status" value="1"/>
</dbReference>
<dbReference type="Pfam" id="PF02569">
    <property type="entry name" value="Pantoate_ligase"/>
    <property type="match status" value="1"/>
</dbReference>
<dbReference type="SUPFAM" id="SSF52374">
    <property type="entry name" value="Nucleotidylyl transferase"/>
    <property type="match status" value="1"/>
</dbReference>
<keyword id="KW-0067">ATP-binding</keyword>
<keyword id="KW-0963">Cytoplasm</keyword>
<keyword id="KW-0436">Ligase</keyword>
<keyword id="KW-0547">Nucleotide-binding</keyword>
<keyword id="KW-0566">Pantothenate biosynthesis</keyword>
<keyword id="KW-1185">Reference proteome</keyword>
<comment type="function">
    <text evidence="1">Catalyzes the condensation of pantoate with beta-alanine in an ATP-dependent reaction via a pantoyl-adenylate intermediate.</text>
</comment>
<comment type="catalytic activity">
    <reaction evidence="1">
        <text>(R)-pantoate + beta-alanine + ATP = (R)-pantothenate + AMP + diphosphate + H(+)</text>
        <dbReference type="Rhea" id="RHEA:10912"/>
        <dbReference type="ChEBI" id="CHEBI:15378"/>
        <dbReference type="ChEBI" id="CHEBI:15980"/>
        <dbReference type="ChEBI" id="CHEBI:29032"/>
        <dbReference type="ChEBI" id="CHEBI:30616"/>
        <dbReference type="ChEBI" id="CHEBI:33019"/>
        <dbReference type="ChEBI" id="CHEBI:57966"/>
        <dbReference type="ChEBI" id="CHEBI:456215"/>
        <dbReference type="EC" id="6.3.2.1"/>
    </reaction>
</comment>
<comment type="pathway">
    <text evidence="1">Cofactor biosynthesis; (R)-pantothenate biosynthesis; (R)-pantothenate from (R)-pantoate and beta-alanine: step 1/1.</text>
</comment>
<comment type="subunit">
    <text evidence="1">Homodimer.</text>
</comment>
<comment type="subcellular location">
    <subcellularLocation>
        <location evidence="1">Cytoplasm</location>
    </subcellularLocation>
</comment>
<comment type="miscellaneous">
    <text evidence="1">The reaction proceeds by a bi uni uni bi ping pong mechanism.</text>
</comment>
<comment type="similarity">
    <text evidence="1">Belongs to the pantothenate synthetase family.</text>
</comment>
<sequence length="284" mass="32107">MLIVETVPILRREIRRWRQEGKRIALVPTMGNLHDGHMTLVDTAKGQADIVIVSIFVNPMQFNRPDDLAKYPRTLQEDCEKLHQHGVNLVFAPADKEIYPDGMEHQTYVDVPELSTMLEGASRPGHFRGVSTVVSKLFNLVQPDLTYFGEKDFQQLQLIRKMIADLAYDITLVSVPTVRDQNGLALSSRNNNLTADEHRIAPELSKIMRSIAEKMAQGERHTEQLLTQASSQLHEAGFVPDELFIRDAETLAPLNTESKKAVILMAAWLGQTRMIDNQQVDLTQ</sequence>
<name>PANC_PHOLL</name>
<feature type="chain" id="PRO_0000128253" description="Pantothenate synthetase">
    <location>
        <begin position="1"/>
        <end position="284"/>
    </location>
</feature>
<feature type="active site" description="Proton donor" evidence="1">
    <location>
        <position position="37"/>
    </location>
</feature>
<feature type="binding site" evidence="1">
    <location>
        <begin position="30"/>
        <end position="37"/>
    </location>
    <ligand>
        <name>ATP</name>
        <dbReference type="ChEBI" id="CHEBI:30616"/>
    </ligand>
</feature>
<feature type="binding site" evidence="1">
    <location>
        <position position="61"/>
    </location>
    <ligand>
        <name>(R)-pantoate</name>
        <dbReference type="ChEBI" id="CHEBI:15980"/>
    </ligand>
</feature>
<feature type="binding site" evidence="1">
    <location>
        <position position="61"/>
    </location>
    <ligand>
        <name>beta-alanine</name>
        <dbReference type="ChEBI" id="CHEBI:57966"/>
    </ligand>
</feature>
<feature type="binding site" evidence="1">
    <location>
        <begin position="149"/>
        <end position="152"/>
    </location>
    <ligand>
        <name>ATP</name>
        <dbReference type="ChEBI" id="CHEBI:30616"/>
    </ligand>
</feature>
<feature type="binding site" evidence="1">
    <location>
        <position position="155"/>
    </location>
    <ligand>
        <name>(R)-pantoate</name>
        <dbReference type="ChEBI" id="CHEBI:15980"/>
    </ligand>
</feature>
<feature type="binding site" evidence="1">
    <location>
        <position position="178"/>
    </location>
    <ligand>
        <name>ATP</name>
        <dbReference type="ChEBI" id="CHEBI:30616"/>
    </ligand>
</feature>
<feature type="binding site" evidence="1">
    <location>
        <begin position="186"/>
        <end position="189"/>
    </location>
    <ligand>
        <name>ATP</name>
        <dbReference type="ChEBI" id="CHEBI:30616"/>
    </ligand>
</feature>